<dbReference type="EMBL" id="CP000302">
    <property type="protein sequence ID" value="ABE54546.1"/>
    <property type="molecule type" value="Genomic_DNA"/>
</dbReference>
<dbReference type="RefSeq" id="WP_011495705.1">
    <property type="nucleotide sequence ID" value="NC_007954.1"/>
</dbReference>
<dbReference type="SMR" id="Q12PT0"/>
<dbReference type="STRING" id="318161.Sden_1260"/>
<dbReference type="KEGG" id="sdn:Sden_1260"/>
<dbReference type="eggNOG" id="COG1160">
    <property type="taxonomic scope" value="Bacteria"/>
</dbReference>
<dbReference type="HOGENOM" id="CLU_016077_5_1_6"/>
<dbReference type="OrthoDB" id="9805918at2"/>
<dbReference type="Proteomes" id="UP000001982">
    <property type="component" value="Chromosome"/>
</dbReference>
<dbReference type="GO" id="GO:0005525">
    <property type="term" value="F:GTP binding"/>
    <property type="evidence" value="ECO:0007669"/>
    <property type="project" value="UniProtKB-UniRule"/>
</dbReference>
<dbReference type="GO" id="GO:0043022">
    <property type="term" value="F:ribosome binding"/>
    <property type="evidence" value="ECO:0007669"/>
    <property type="project" value="TreeGrafter"/>
</dbReference>
<dbReference type="GO" id="GO:0042254">
    <property type="term" value="P:ribosome biogenesis"/>
    <property type="evidence" value="ECO:0007669"/>
    <property type="project" value="UniProtKB-KW"/>
</dbReference>
<dbReference type="CDD" id="cd01894">
    <property type="entry name" value="EngA1"/>
    <property type="match status" value="1"/>
</dbReference>
<dbReference type="CDD" id="cd01895">
    <property type="entry name" value="EngA2"/>
    <property type="match status" value="1"/>
</dbReference>
<dbReference type="FunFam" id="3.30.300.20:FF:000004">
    <property type="entry name" value="GTPase Der"/>
    <property type="match status" value="1"/>
</dbReference>
<dbReference type="FunFam" id="3.40.50.300:FF:000040">
    <property type="entry name" value="GTPase Der"/>
    <property type="match status" value="1"/>
</dbReference>
<dbReference type="FunFam" id="3.40.50.300:FF:000057">
    <property type="entry name" value="GTPase Der"/>
    <property type="match status" value="1"/>
</dbReference>
<dbReference type="Gene3D" id="3.30.300.20">
    <property type="match status" value="1"/>
</dbReference>
<dbReference type="Gene3D" id="3.40.50.300">
    <property type="entry name" value="P-loop containing nucleotide triphosphate hydrolases"/>
    <property type="match status" value="2"/>
</dbReference>
<dbReference type="HAMAP" id="MF_00195">
    <property type="entry name" value="GTPase_Der"/>
    <property type="match status" value="1"/>
</dbReference>
<dbReference type="InterPro" id="IPR031166">
    <property type="entry name" value="G_ENGA"/>
</dbReference>
<dbReference type="InterPro" id="IPR006073">
    <property type="entry name" value="GTP-bd"/>
</dbReference>
<dbReference type="InterPro" id="IPR016484">
    <property type="entry name" value="GTPase_Der"/>
</dbReference>
<dbReference type="InterPro" id="IPR032859">
    <property type="entry name" value="KH_dom-like"/>
</dbReference>
<dbReference type="InterPro" id="IPR015946">
    <property type="entry name" value="KH_dom-like_a/b"/>
</dbReference>
<dbReference type="InterPro" id="IPR027417">
    <property type="entry name" value="P-loop_NTPase"/>
</dbReference>
<dbReference type="InterPro" id="IPR005225">
    <property type="entry name" value="Small_GTP-bd"/>
</dbReference>
<dbReference type="NCBIfam" id="TIGR03594">
    <property type="entry name" value="GTPase_EngA"/>
    <property type="match status" value="1"/>
</dbReference>
<dbReference type="NCBIfam" id="TIGR00231">
    <property type="entry name" value="small_GTP"/>
    <property type="match status" value="2"/>
</dbReference>
<dbReference type="PANTHER" id="PTHR43834">
    <property type="entry name" value="GTPASE DER"/>
    <property type="match status" value="1"/>
</dbReference>
<dbReference type="PANTHER" id="PTHR43834:SF6">
    <property type="entry name" value="GTPASE DER"/>
    <property type="match status" value="1"/>
</dbReference>
<dbReference type="Pfam" id="PF14714">
    <property type="entry name" value="KH_dom-like"/>
    <property type="match status" value="1"/>
</dbReference>
<dbReference type="Pfam" id="PF01926">
    <property type="entry name" value="MMR_HSR1"/>
    <property type="match status" value="2"/>
</dbReference>
<dbReference type="PIRSF" id="PIRSF006485">
    <property type="entry name" value="GTP-binding_EngA"/>
    <property type="match status" value="1"/>
</dbReference>
<dbReference type="PRINTS" id="PR00326">
    <property type="entry name" value="GTP1OBG"/>
</dbReference>
<dbReference type="SUPFAM" id="SSF52540">
    <property type="entry name" value="P-loop containing nucleoside triphosphate hydrolases"/>
    <property type="match status" value="2"/>
</dbReference>
<dbReference type="PROSITE" id="PS51712">
    <property type="entry name" value="G_ENGA"/>
    <property type="match status" value="2"/>
</dbReference>
<gene>
    <name evidence="1" type="primary">der</name>
    <name type="synonym">engA</name>
    <name type="ordered locus">Sden_1260</name>
</gene>
<evidence type="ECO:0000255" key="1">
    <source>
        <dbReference type="HAMAP-Rule" id="MF_00195"/>
    </source>
</evidence>
<evidence type="ECO:0000256" key="2">
    <source>
        <dbReference type="SAM" id="MobiDB-lite"/>
    </source>
</evidence>
<comment type="function">
    <text evidence="1">GTPase that plays an essential role in the late steps of ribosome biogenesis.</text>
</comment>
<comment type="subunit">
    <text evidence="1">Associates with the 50S ribosomal subunit.</text>
</comment>
<comment type="similarity">
    <text evidence="1">Belongs to the TRAFAC class TrmE-Era-EngA-EngB-Septin-like GTPase superfamily. EngA (Der) GTPase family.</text>
</comment>
<organism>
    <name type="scientific">Shewanella denitrificans (strain OS217 / ATCC BAA-1090 / DSM 15013)</name>
    <dbReference type="NCBI Taxonomy" id="318161"/>
    <lineage>
        <taxon>Bacteria</taxon>
        <taxon>Pseudomonadati</taxon>
        <taxon>Pseudomonadota</taxon>
        <taxon>Gammaproteobacteria</taxon>
        <taxon>Alteromonadales</taxon>
        <taxon>Shewanellaceae</taxon>
        <taxon>Shewanella</taxon>
    </lineage>
</organism>
<accession>Q12PT0</accession>
<name>DER_SHEDO</name>
<protein>
    <recommendedName>
        <fullName evidence="1">GTPase Der</fullName>
    </recommendedName>
    <alternativeName>
        <fullName evidence="1">GTP-binding protein EngA</fullName>
    </alternativeName>
</protein>
<proteinExistence type="inferred from homology"/>
<reference key="1">
    <citation type="submission" date="2006-03" db="EMBL/GenBank/DDBJ databases">
        <title>Complete sequence of Shewanella denitrificans OS217.</title>
        <authorList>
            <consortium name="US DOE Joint Genome Institute"/>
            <person name="Copeland A."/>
            <person name="Lucas S."/>
            <person name="Lapidus A."/>
            <person name="Barry K."/>
            <person name="Detter J.C."/>
            <person name="Glavina del Rio T."/>
            <person name="Hammon N."/>
            <person name="Israni S."/>
            <person name="Dalin E."/>
            <person name="Tice H."/>
            <person name="Pitluck S."/>
            <person name="Brettin T."/>
            <person name="Bruce D."/>
            <person name="Han C."/>
            <person name="Tapia R."/>
            <person name="Gilna P."/>
            <person name="Kiss H."/>
            <person name="Schmutz J."/>
            <person name="Larimer F."/>
            <person name="Land M."/>
            <person name="Hauser L."/>
            <person name="Kyrpides N."/>
            <person name="Lykidis A."/>
            <person name="Richardson P."/>
        </authorList>
    </citation>
    <scope>NUCLEOTIDE SEQUENCE [LARGE SCALE GENOMIC DNA]</scope>
    <source>
        <strain>OS217 / ATCC BAA-1090 / DSM 15013</strain>
    </source>
</reference>
<keyword id="KW-0342">GTP-binding</keyword>
<keyword id="KW-0547">Nucleotide-binding</keyword>
<keyword id="KW-1185">Reference proteome</keyword>
<keyword id="KW-0677">Repeat</keyword>
<keyword id="KW-0690">Ribosome biogenesis</keyword>
<sequence length="491" mass="54715">MIPVVALVGRPNVGKSTLFNRLTRTRDALVADFPGLTRDRKYGRAFLSGYEFIVVDTGGIDGSEEGIETKMAEQSLAAIEEADVVLFLTDARAGLTSADLAIAQHLRSRDKTTFVVANKVDGIDADSVCGEFWALGLGEVYQMAAAQGRGVTNMIEYALAPYAEAMGLNRDDDEQAIEEEREYTEEEAEAEQKRLQDLPIKLAIIGKPNVGKSTLINRILGEERVVVYDAPGTTRDSIYIPMEREGREYVLIDTAGVRRRSKVHEVIEKFSVIKTLKAVEDANVVLLVVDAREGIAEQDLGLLGFTLNAGRALVIAVNKWDGIDQTVKDRVKSELDRRLGFIDFAKIHFISALHGTGVGHLYESIEEAYDSATRRVSTSMLTRVMQMSQDDHQPPLVNGRRVKLKYAHAGGYNPPIIVVHGNQVSKLPDSYKRYMMNYFRRSLKVVGTPIQIRFQEGDNPFEGKVDKLTMGQERRRKRALSHINDRKTKGE</sequence>
<feature type="chain" id="PRO_1000011734" description="GTPase Der">
    <location>
        <begin position="1"/>
        <end position="491"/>
    </location>
</feature>
<feature type="domain" description="EngA-type G 1">
    <location>
        <begin position="3"/>
        <end position="166"/>
    </location>
</feature>
<feature type="domain" description="EngA-type G 2">
    <location>
        <begin position="200"/>
        <end position="373"/>
    </location>
</feature>
<feature type="domain" description="KH-like" evidence="1">
    <location>
        <begin position="374"/>
        <end position="458"/>
    </location>
</feature>
<feature type="region of interest" description="Disordered" evidence="2">
    <location>
        <begin position="472"/>
        <end position="491"/>
    </location>
</feature>
<feature type="binding site" evidence="1">
    <location>
        <begin position="9"/>
        <end position="16"/>
    </location>
    <ligand>
        <name>GTP</name>
        <dbReference type="ChEBI" id="CHEBI:37565"/>
        <label>1</label>
    </ligand>
</feature>
<feature type="binding site" evidence="1">
    <location>
        <begin position="56"/>
        <end position="60"/>
    </location>
    <ligand>
        <name>GTP</name>
        <dbReference type="ChEBI" id="CHEBI:37565"/>
        <label>1</label>
    </ligand>
</feature>
<feature type="binding site" evidence="1">
    <location>
        <begin position="118"/>
        <end position="121"/>
    </location>
    <ligand>
        <name>GTP</name>
        <dbReference type="ChEBI" id="CHEBI:37565"/>
        <label>1</label>
    </ligand>
</feature>
<feature type="binding site" evidence="1">
    <location>
        <begin position="206"/>
        <end position="213"/>
    </location>
    <ligand>
        <name>GTP</name>
        <dbReference type="ChEBI" id="CHEBI:37565"/>
        <label>2</label>
    </ligand>
</feature>
<feature type="binding site" evidence="1">
    <location>
        <begin position="253"/>
        <end position="257"/>
    </location>
    <ligand>
        <name>GTP</name>
        <dbReference type="ChEBI" id="CHEBI:37565"/>
        <label>2</label>
    </ligand>
</feature>
<feature type="binding site" evidence="1">
    <location>
        <begin position="318"/>
        <end position="321"/>
    </location>
    <ligand>
        <name>GTP</name>
        <dbReference type="ChEBI" id="CHEBI:37565"/>
        <label>2</label>
    </ligand>
</feature>